<sequence>MEPIKNLPRLCRTLGYEFKNIDLLTQALTHRSAANKHNERLEFLGDSILSIVISDALYHQFPKATEGDLSRMRATLVRGDTLTLIAKAFKLGDYLFLGPGELKSGGFRRESILADAVEAIIGAIYLDSDLEVCRKLLLHWYAERLAEIQPGVNQKDAKTLLQEYLQGLKKPLPDYQVINIEGDAHDQTFTVECRIDDLSESVIGVASSRRKAEQIAAAQVLELLKK</sequence>
<comment type="function">
    <text evidence="1">Digests double-stranded RNA. Involved in the processing of primary rRNA transcript to yield the immediate precursors to the large and small rRNAs (23S and 16S). Processes some mRNAs, and tRNAs when they are encoded in the rRNA operon. Processes pre-crRNA and tracrRNA of type II CRISPR loci if present in the organism.</text>
</comment>
<comment type="catalytic activity">
    <reaction evidence="1">
        <text>Endonucleolytic cleavage to 5'-phosphomonoester.</text>
        <dbReference type="EC" id="3.1.26.3"/>
    </reaction>
</comment>
<comment type="cofactor">
    <cofactor evidence="1">
        <name>Mg(2+)</name>
        <dbReference type="ChEBI" id="CHEBI:18420"/>
    </cofactor>
</comment>
<comment type="subunit">
    <text evidence="1">Homodimer.</text>
</comment>
<comment type="subcellular location">
    <subcellularLocation>
        <location evidence="1">Cytoplasm</location>
    </subcellularLocation>
</comment>
<comment type="similarity">
    <text evidence="1">Belongs to the ribonuclease III family.</text>
</comment>
<protein>
    <recommendedName>
        <fullName evidence="1">Ribonuclease 3</fullName>
        <ecNumber evidence="1">3.1.26.3</ecNumber>
    </recommendedName>
    <alternativeName>
        <fullName evidence="1">Ribonuclease III</fullName>
        <shortName evidence="1">RNase III</shortName>
    </alternativeName>
</protein>
<accession>A0KZN2</accession>
<proteinExistence type="inferred from homology"/>
<organism>
    <name type="scientific">Shewanella sp. (strain ANA-3)</name>
    <dbReference type="NCBI Taxonomy" id="94122"/>
    <lineage>
        <taxon>Bacteria</taxon>
        <taxon>Pseudomonadati</taxon>
        <taxon>Pseudomonadota</taxon>
        <taxon>Gammaproteobacteria</taxon>
        <taxon>Alteromonadales</taxon>
        <taxon>Shewanellaceae</taxon>
        <taxon>Shewanella</taxon>
    </lineage>
</organism>
<dbReference type="EC" id="3.1.26.3" evidence="1"/>
<dbReference type="EMBL" id="CP000469">
    <property type="protein sequence ID" value="ABK49251.1"/>
    <property type="molecule type" value="Genomic_DNA"/>
</dbReference>
<dbReference type="RefSeq" id="WP_011717872.1">
    <property type="nucleotide sequence ID" value="NC_008577.1"/>
</dbReference>
<dbReference type="SMR" id="A0KZN2"/>
<dbReference type="STRING" id="94122.Shewana3_3026"/>
<dbReference type="GeneID" id="94728949"/>
<dbReference type="KEGG" id="shn:Shewana3_3026"/>
<dbReference type="eggNOG" id="COG0571">
    <property type="taxonomic scope" value="Bacteria"/>
</dbReference>
<dbReference type="HOGENOM" id="CLU_000907_1_1_6"/>
<dbReference type="OrthoDB" id="9805026at2"/>
<dbReference type="Proteomes" id="UP000002589">
    <property type="component" value="Chromosome"/>
</dbReference>
<dbReference type="GO" id="GO:0005737">
    <property type="term" value="C:cytoplasm"/>
    <property type="evidence" value="ECO:0007669"/>
    <property type="project" value="UniProtKB-SubCell"/>
</dbReference>
<dbReference type="GO" id="GO:0003725">
    <property type="term" value="F:double-stranded RNA binding"/>
    <property type="evidence" value="ECO:0007669"/>
    <property type="project" value="TreeGrafter"/>
</dbReference>
<dbReference type="GO" id="GO:0046872">
    <property type="term" value="F:metal ion binding"/>
    <property type="evidence" value="ECO:0007669"/>
    <property type="project" value="UniProtKB-KW"/>
</dbReference>
<dbReference type="GO" id="GO:0004525">
    <property type="term" value="F:ribonuclease III activity"/>
    <property type="evidence" value="ECO:0007669"/>
    <property type="project" value="UniProtKB-UniRule"/>
</dbReference>
<dbReference type="GO" id="GO:0019843">
    <property type="term" value="F:rRNA binding"/>
    <property type="evidence" value="ECO:0007669"/>
    <property type="project" value="UniProtKB-KW"/>
</dbReference>
<dbReference type="GO" id="GO:0006397">
    <property type="term" value="P:mRNA processing"/>
    <property type="evidence" value="ECO:0007669"/>
    <property type="project" value="UniProtKB-UniRule"/>
</dbReference>
<dbReference type="GO" id="GO:0010468">
    <property type="term" value="P:regulation of gene expression"/>
    <property type="evidence" value="ECO:0007669"/>
    <property type="project" value="TreeGrafter"/>
</dbReference>
<dbReference type="GO" id="GO:0006364">
    <property type="term" value="P:rRNA processing"/>
    <property type="evidence" value="ECO:0007669"/>
    <property type="project" value="UniProtKB-UniRule"/>
</dbReference>
<dbReference type="GO" id="GO:0008033">
    <property type="term" value="P:tRNA processing"/>
    <property type="evidence" value="ECO:0007669"/>
    <property type="project" value="UniProtKB-KW"/>
</dbReference>
<dbReference type="CDD" id="cd10845">
    <property type="entry name" value="DSRM_RNAse_III_family"/>
    <property type="match status" value="1"/>
</dbReference>
<dbReference type="CDD" id="cd00593">
    <property type="entry name" value="RIBOc"/>
    <property type="match status" value="1"/>
</dbReference>
<dbReference type="FunFam" id="1.10.1520.10:FF:000001">
    <property type="entry name" value="Ribonuclease 3"/>
    <property type="match status" value="1"/>
</dbReference>
<dbReference type="FunFam" id="3.30.160.20:FF:000003">
    <property type="entry name" value="Ribonuclease 3"/>
    <property type="match status" value="1"/>
</dbReference>
<dbReference type="Gene3D" id="3.30.160.20">
    <property type="match status" value="1"/>
</dbReference>
<dbReference type="Gene3D" id="1.10.1520.10">
    <property type="entry name" value="Ribonuclease III domain"/>
    <property type="match status" value="1"/>
</dbReference>
<dbReference type="HAMAP" id="MF_00104">
    <property type="entry name" value="RNase_III"/>
    <property type="match status" value="1"/>
</dbReference>
<dbReference type="InterPro" id="IPR014720">
    <property type="entry name" value="dsRBD_dom"/>
</dbReference>
<dbReference type="InterPro" id="IPR011907">
    <property type="entry name" value="RNase_III"/>
</dbReference>
<dbReference type="InterPro" id="IPR000999">
    <property type="entry name" value="RNase_III_dom"/>
</dbReference>
<dbReference type="InterPro" id="IPR036389">
    <property type="entry name" value="RNase_III_sf"/>
</dbReference>
<dbReference type="NCBIfam" id="TIGR02191">
    <property type="entry name" value="RNaseIII"/>
    <property type="match status" value="1"/>
</dbReference>
<dbReference type="PANTHER" id="PTHR11207:SF0">
    <property type="entry name" value="RIBONUCLEASE 3"/>
    <property type="match status" value="1"/>
</dbReference>
<dbReference type="PANTHER" id="PTHR11207">
    <property type="entry name" value="RIBONUCLEASE III"/>
    <property type="match status" value="1"/>
</dbReference>
<dbReference type="Pfam" id="PF00035">
    <property type="entry name" value="dsrm"/>
    <property type="match status" value="1"/>
</dbReference>
<dbReference type="Pfam" id="PF14622">
    <property type="entry name" value="Ribonucleas_3_3"/>
    <property type="match status" value="1"/>
</dbReference>
<dbReference type="SMART" id="SM00358">
    <property type="entry name" value="DSRM"/>
    <property type="match status" value="1"/>
</dbReference>
<dbReference type="SMART" id="SM00535">
    <property type="entry name" value="RIBOc"/>
    <property type="match status" value="1"/>
</dbReference>
<dbReference type="SUPFAM" id="SSF54768">
    <property type="entry name" value="dsRNA-binding domain-like"/>
    <property type="match status" value="1"/>
</dbReference>
<dbReference type="SUPFAM" id="SSF69065">
    <property type="entry name" value="RNase III domain-like"/>
    <property type="match status" value="1"/>
</dbReference>
<dbReference type="PROSITE" id="PS50137">
    <property type="entry name" value="DS_RBD"/>
    <property type="match status" value="1"/>
</dbReference>
<dbReference type="PROSITE" id="PS00517">
    <property type="entry name" value="RNASE_3_1"/>
    <property type="match status" value="1"/>
</dbReference>
<dbReference type="PROSITE" id="PS50142">
    <property type="entry name" value="RNASE_3_2"/>
    <property type="match status" value="1"/>
</dbReference>
<feature type="chain" id="PRO_1000075817" description="Ribonuclease 3">
    <location>
        <begin position="1"/>
        <end position="226"/>
    </location>
</feature>
<feature type="domain" description="RNase III" evidence="1">
    <location>
        <begin position="7"/>
        <end position="129"/>
    </location>
</feature>
<feature type="domain" description="DRBM" evidence="1">
    <location>
        <begin position="156"/>
        <end position="226"/>
    </location>
</feature>
<feature type="active site" evidence="1">
    <location>
        <position position="46"/>
    </location>
</feature>
<feature type="active site" evidence="1">
    <location>
        <position position="118"/>
    </location>
</feature>
<feature type="binding site" evidence="1">
    <location>
        <position position="42"/>
    </location>
    <ligand>
        <name>Mg(2+)</name>
        <dbReference type="ChEBI" id="CHEBI:18420"/>
    </ligand>
</feature>
<feature type="binding site" evidence="1">
    <location>
        <position position="115"/>
    </location>
    <ligand>
        <name>Mg(2+)</name>
        <dbReference type="ChEBI" id="CHEBI:18420"/>
    </ligand>
</feature>
<feature type="binding site" evidence="1">
    <location>
        <position position="118"/>
    </location>
    <ligand>
        <name>Mg(2+)</name>
        <dbReference type="ChEBI" id="CHEBI:18420"/>
    </ligand>
</feature>
<reference key="1">
    <citation type="submission" date="2006-09" db="EMBL/GenBank/DDBJ databases">
        <title>Complete sequence of chromosome 1 of Shewanella sp. ANA-3.</title>
        <authorList>
            <person name="Copeland A."/>
            <person name="Lucas S."/>
            <person name="Lapidus A."/>
            <person name="Barry K."/>
            <person name="Detter J.C."/>
            <person name="Glavina del Rio T."/>
            <person name="Hammon N."/>
            <person name="Israni S."/>
            <person name="Dalin E."/>
            <person name="Tice H."/>
            <person name="Pitluck S."/>
            <person name="Chertkov O."/>
            <person name="Brettin T."/>
            <person name="Bruce D."/>
            <person name="Han C."/>
            <person name="Tapia R."/>
            <person name="Gilna P."/>
            <person name="Schmutz J."/>
            <person name="Larimer F."/>
            <person name="Land M."/>
            <person name="Hauser L."/>
            <person name="Kyrpides N."/>
            <person name="Kim E."/>
            <person name="Newman D."/>
            <person name="Salticov C."/>
            <person name="Konstantinidis K."/>
            <person name="Klappenback J."/>
            <person name="Tiedje J."/>
            <person name="Richardson P."/>
        </authorList>
    </citation>
    <scope>NUCLEOTIDE SEQUENCE [LARGE SCALE GENOMIC DNA]</scope>
    <source>
        <strain>ANA-3</strain>
    </source>
</reference>
<name>RNC_SHESA</name>
<evidence type="ECO:0000255" key="1">
    <source>
        <dbReference type="HAMAP-Rule" id="MF_00104"/>
    </source>
</evidence>
<gene>
    <name evidence="1" type="primary">rnc</name>
    <name type="ordered locus">Shewana3_3026</name>
</gene>
<keyword id="KW-0963">Cytoplasm</keyword>
<keyword id="KW-0255">Endonuclease</keyword>
<keyword id="KW-0378">Hydrolase</keyword>
<keyword id="KW-0460">Magnesium</keyword>
<keyword id="KW-0479">Metal-binding</keyword>
<keyword id="KW-0507">mRNA processing</keyword>
<keyword id="KW-0540">Nuclease</keyword>
<keyword id="KW-0694">RNA-binding</keyword>
<keyword id="KW-0698">rRNA processing</keyword>
<keyword id="KW-0699">rRNA-binding</keyword>
<keyword id="KW-0819">tRNA processing</keyword>